<dbReference type="EMBL" id="AM933172">
    <property type="protein sequence ID" value="CAR34838.1"/>
    <property type="molecule type" value="Genomic_DNA"/>
</dbReference>
<dbReference type="RefSeq" id="WP_000447529.1">
    <property type="nucleotide sequence ID" value="NC_011294.1"/>
</dbReference>
<dbReference type="SMR" id="B5R286"/>
<dbReference type="GeneID" id="93778672"/>
<dbReference type="KEGG" id="set:SEN3263"/>
<dbReference type="HOGENOM" id="CLU_083987_3_3_6"/>
<dbReference type="Proteomes" id="UP000000613">
    <property type="component" value="Chromosome"/>
</dbReference>
<dbReference type="GO" id="GO:0022625">
    <property type="term" value="C:cytosolic large ribosomal subunit"/>
    <property type="evidence" value="ECO:0007669"/>
    <property type="project" value="TreeGrafter"/>
</dbReference>
<dbReference type="GO" id="GO:0019843">
    <property type="term" value="F:rRNA binding"/>
    <property type="evidence" value="ECO:0007669"/>
    <property type="project" value="UniProtKB-UniRule"/>
</dbReference>
<dbReference type="GO" id="GO:0003735">
    <property type="term" value="F:structural constituent of ribosome"/>
    <property type="evidence" value="ECO:0007669"/>
    <property type="project" value="InterPro"/>
</dbReference>
<dbReference type="GO" id="GO:0006412">
    <property type="term" value="P:translation"/>
    <property type="evidence" value="ECO:0007669"/>
    <property type="project" value="UniProtKB-UniRule"/>
</dbReference>
<dbReference type="CDD" id="cd00336">
    <property type="entry name" value="Ribosomal_L22"/>
    <property type="match status" value="1"/>
</dbReference>
<dbReference type="FunFam" id="3.90.470.10:FF:000001">
    <property type="entry name" value="50S ribosomal protein L22"/>
    <property type="match status" value="1"/>
</dbReference>
<dbReference type="Gene3D" id="3.90.470.10">
    <property type="entry name" value="Ribosomal protein L22/L17"/>
    <property type="match status" value="1"/>
</dbReference>
<dbReference type="HAMAP" id="MF_01331_B">
    <property type="entry name" value="Ribosomal_uL22_B"/>
    <property type="match status" value="1"/>
</dbReference>
<dbReference type="InterPro" id="IPR001063">
    <property type="entry name" value="Ribosomal_uL22"/>
</dbReference>
<dbReference type="InterPro" id="IPR005727">
    <property type="entry name" value="Ribosomal_uL22_bac/chlpt-type"/>
</dbReference>
<dbReference type="InterPro" id="IPR047867">
    <property type="entry name" value="Ribosomal_uL22_bac/org-type"/>
</dbReference>
<dbReference type="InterPro" id="IPR018260">
    <property type="entry name" value="Ribosomal_uL22_CS"/>
</dbReference>
<dbReference type="InterPro" id="IPR036394">
    <property type="entry name" value="Ribosomal_uL22_sf"/>
</dbReference>
<dbReference type="NCBIfam" id="TIGR01044">
    <property type="entry name" value="rplV_bact"/>
    <property type="match status" value="1"/>
</dbReference>
<dbReference type="PANTHER" id="PTHR13501">
    <property type="entry name" value="CHLOROPLAST 50S RIBOSOMAL PROTEIN L22-RELATED"/>
    <property type="match status" value="1"/>
</dbReference>
<dbReference type="PANTHER" id="PTHR13501:SF8">
    <property type="entry name" value="LARGE RIBOSOMAL SUBUNIT PROTEIN UL22M"/>
    <property type="match status" value="1"/>
</dbReference>
<dbReference type="Pfam" id="PF00237">
    <property type="entry name" value="Ribosomal_L22"/>
    <property type="match status" value="1"/>
</dbReference>
<dbReference type="SUPFAM" id="SSF54843">
    <property type="entry name" value="Ribosomal protein L22"/>
    <property type="match status" value="1"/>
</dbReference>
<dbReference type="PROSITE" id="PS00464">
    <property type="entry name" value="RIBOSOMAL_L22"/>
    <property type="match status" value="1"/>
</dbReference>
<name>RL22_SALEP</name>
<evidence type="ECO:0000255" key="1">
    <source>
        <dbReference type="HAMAP-Rule" id="MF_01331"/>
    </source>
</evidence>
<evidence type="ECO:0000305" key="2"/>
<gene>
    <name evidence="1" type="primary">rplV</name>
    <name type="ordered locus">SEN3263</name>
</gene>
<feature type="chain" id="PRO_1000142303" description="Large ribosomal subunit protein uL22">
    <location>
        <begin position="1"/>
        <end position="110"/>
    </location>
</feature>
<reference key="1">
    <citation type="journal article" date="2008" name="Genome Res.">
        <title>Comparative genome analysis of Salmonella enteritidis PT4 and Salmonella gallinarum 287/91 provides insights into evolutionary and host adaptation pathways.</title>
        <authorList>
            <person name="Thomson N.R."/>
            <person name="Clayton D.J."/>
            <person name="Windhorst D."/>
            <person name="Vernikos G."/>
            <person name="Davidson S."/>
            <person name="Churcher C."/>
            <person name="Quail M.A."/>
            <person name="Stevens M."/>
            <person name="Jones M.A."/>
            <person name="Watson M."/>
            <person name="Barron A."/>
            <person name="Layton A."/>
            <person name="Pickard D."/>
            <person name="Kingsley R.A."/>
            <person name="Bignell A."/>
            <person name="Clark L."/>
            <person name="Harris B."/>
            <person name="Ormond D."/>
            <person name="Abdellah Z."/>
            <person name="Brooks K."/>
            <person name="Cherevach I."/>
            <person name="Chillingworth T."/>
            <person name="Woodward J."/>
            <person name="Norberczak H."/>
            <person name="Lord A."/>
            <person name="Arrowsmith C."/>
            <person name="Jagels K."/>
            <person name="Moule S."/>
            <person name="Mungall K."/>
            <person name="Saunders M."/>
            <person name="Whitehead S."/>
            <person name="Chabalgoity J.A."/>
            <person name="Maskell D."/>
            <person name="Humphreys T."/>
            <person name="Roberts M."/>
            <person name="Barrow P.A."/>
            <person name="Dougan G."/>
            <person name="Parkhill J."/>
        </authorList>
    </citation>
    <scope>NUCLEOTIDE SEQUENCE [LARGE SCALE GENOMIC DNA]</scope>
    <source>
        <strain>P125109</strain>
    </source>
</reference>
<comment type="function">
    <text evidence="1">This protein binds specifically to 23S rRNA; its binding is stimulated by other ribosomal proteins, e.g. L4, L17, and L20. It is important during the early stages of 50S assembly. It makes multiple contacts with different domains of the 23S rRNA in the assembled 50S subunit and ribosome (By similarity).</text>
</comment>
<comment type="function">
    <text evidence="1">The globular domain of the protein is located near the polypeptide exit tunnel on the outside of the subunit, while an extended beta-hairpin is found that lines the wall of the exit tunnel in the center of the 70S ribosome.</text>
</comment>
<comment type="subunit">
    <text evidence="1">Part of the 50S ribosomal subunit.</text>
</comment>
<comment type="similarity">
    <text evidence="1">Belongs to the universal ribosomal protein uL22 family.</text>
</comment>
<accession>B5R286</accession>
<protein>
    <recommendedName>
        <fullName evidence="1">Large ribosomal subunit protein uL22</fullName>
    </recommendedName>
    <alternativeName>
        <fullName evidence="2">50S ribosomal protein L22</fullName>
    </alternativeName>
</protein>
<sequence>METIAKHRHARSSAQKVRLVADLIRGKKVSQALDILTYTNKKAAVLVKKVLESAIANAEHNDGADIDDLKVTKIFVDEGPSMKRIMPRAKGRADRILKRTSHITVVVSDR</sequence>
<organism>
    <name type="scientific">Salmonella enteritidis PT4 (strain P125109)</name>
    <dbReference type="NCBI Taxonomy" id="550537"/>
    <lineage>
        <taxon>Bacteria</taxon>
        <taxon>Pseudomonadati</taxon>
        <taxon>Pseudomonadota</taxon>
        <taxon>Gammaproteobacteria</taxon>
        <taxon>Enterobacterales</taxon>
        <taxon>Enterobacteriaceae</taxon>
        <taxon>Salmonella</taxon>
    </lineage>
</organism>
<proteinExistence type="inferred from homology"/>
<keyword id="KW-0687">Ribonucleoprotein</keyword>
<keyword id="KW-0689">Ribosomal protein</keyword>
<keyword id="KW-0694">RNA-binding</keyword>
<keyword id="KW-0699">rRNA-binding</keyword>